<name>MRAY_BORAP</name>
<sequence>MFYLLGLRLLKYITFRMAYATIFAFLLSLIVGPHIILRLKKLRADQILREDGPKRHLSEKTGIPTMGGILIFFCVFISLVFWSNILNVYFLIIVFVMFGFAFLGFIDDFLKIKKKTSDGLKARFKVYGQIIFSFISVSILYYLGGEHVSIIYFPFIKSFKMDLGVFYIPFGMFILIAASNSFNLTDGLDGLAIGLSIVITGALIIIAYITSRADFAAYLHIPNIKGSEELVIFLGALLGGSFGFLWFNAYPAKIMMGDTGSLALGAILGMTALILKSEILFSILAGVFIIETMSVIIQVIVYKKTKKRVFKMAPLHHHFEELGWSEMQVVIRFWIIGLIFAIIALSTIKIR</sequence>
<comment type="function">
    <text evidence="1">Catalyzes the initial step of the lipid cycle reactions in the biosynthesis of the cell wall peptidoglycan: transfers peptidoglycan precursor phospho-MurNAc-pentapeptide from UDP-MurNAc-pentapeptide onto the lipid carrier undecaprenyl phosphate, yielding undecaprenyl-pyrophosphoryl-MurNAc-pentapeptide, known as lipid I.</text>
</comment>
<comment type="catalytic activity">
    <reaction evidence="1">
        <text>UDP-N-acetyl-alpha-D-muramoyl-L-alanyl-gamma-D-glutamyl-meso-2,6-diaminopimeloyl-D-alanyl-D-alanine + di-trans,octa-cis-undecaprenyl phosphate = di-trans,octa-cis-undecaprenyl diphospho-N-acetyl-alpha-D-muramoyl-L-alanyl-D-glutamyl-meso-2,6-diaminopimeloyl-D-alanyl-D-alanine + UMP</text>
        <dbReference type="Rhea" id="RHEA:28386"/>
        <dbReference type="ChEBI" id="CHEBI:57865"/>
        <dbReference type="ChEBI" id="CHEBI:60392"/>
        <dbReference type="ChEBI" id="CHEBI:61386"/>
        <dbReference type="ChEBI" id="CHEBI:61387"/>
        <dbReference type="EC" id="2.7.8.13"/>
    </reaction>
</comment>
<comment type="cofactor">
    <cofactor evidence="1">
        <name>Mg(2+)</name>
        <dbReference type="ChEBI" id="CHEBI:18420"/>
    </cofactor>
</comment>
<comment type="pathway">
    <text evidence="1">Cell wall biogenesis; peptidoglycan biosynthesis.</text>
</comment>
<comment type="subcellular location">
    <subcellularLocation>
        <location evidence="1">Cell inner membrane</location>
        <topology evidence="1">Multi-pass membrane protein</topology>
    </subcellularLocation>
</comment>
<comment type="similarity">
    <text evidence="1">Belongs to the glycosyltransferase 4 family. MraY subfamily.</text>
</comment>
<evidence type="ECO:0000255" key="1">
    <source>
        <dbReference type="HAMAP-Rule" id="MF_00038"/>
    </source>
</evidence>
<keyword id="KW-0131">Cell cycle</keyword>
<keyword id="KW-0132">Cell division</keyword>
<keyword id="KW-0997">Cell inner membrane</keyword>
<keyword id="KW-1003">Cell membrane</keyword>
<keyword id="KW-0133">Cell shape</keyword>
<keyword id="KW-0961">Cell wall biogenesis/degradation</keyword>
<keyword id="KW-0460">Magnesium</keyword>
<keyword id="KW-0472">Membrane</keyword>
<keyword id="KW-0479">Metal-binding</keyword>
<keyword id="KW-0573">Peptidoglycan synthesis</keyword>
<keyword id="KW-0808">Transferase</keyword>
<keyword id="KW-0812">Transmembrane</keyword>
<keyword id="KW-1133">Transmembrane helix</keyword>
<accession>Q0SNK7</accession>
<accession>G0IRM1</accession>
<protein>
    <recommendedName>
        <fullName evidence="1">Phospho-N-acetylmuramoyl-pentapeptide-transferase</fullName>
        <ecNumber evidence="1">2.7.8.13</ecNumber>
    </recommendedName>
    <alternativeName>
        <fullName evidence="1">UDP-MurNAc-pentapeptide phosphotransferase</fullName>
    </alternativeName>
</protein>
<organism>
    <name type="scientific">Borreliella afzelii (strain PKo)</name>
    <name type="common">Borrelia afzelii</name>
    <dbReference type="NCBI Taxonomy" id="390236"/>
    <lineage>
        <taxon>Bacteria</taxon>
        <taxon>Pseudomonadati</taxon>
        <taxon>Spirochaetota</taxon>
        <taxon>Spirochaetia</taxon>
        <taxon>Spirochaetales</taxon>
        <taxon>Borreliaceae</taxon>
        <taxon>Borreliella</taxon>
    </lineage>
</organism>
<feature type="chain" id="PRO_1000002940" description="Phospho-N-acetylmuramoyl-pentapeptide-transferase">
    <location>
        <begin position="1"/>
        <end position="351"/>
    </location>
</feature>
<feature type="transmembrane region" description="Helical" evidence="1">
    <location>
        <begin position="17"/>
        <end position="37"/>
    </location>
</feature>
<feature type="transmembrane region" description="Helical" evidence="1">
    <location>
        <begin position="62"/>
        <end position="82"/>
    </location>
</feature>
<feature type="transmembrane region" description="Helical" evidence="1">
    <location>
        <begin position="85"/>
        <end position="105"/>
    </location>
</feature>
<feature type="transmembrane region" description="Helical" evidence="1">
    <location>
        <begin position="130"/>
        <end position="150"/>
    </location>
</feature>
<feature type="transmembrane region" description="Helical" evidence="1">
    <location>
        <begin position="163"/>
        <end position="183"/>
    </location>
</feature>
<feature type="transmembrane region" description="Helical" evidence="1">
    <location>
        <begin position="190"/>
        <end position="210"/>
    </location>
</feature>
<feature type="transmembrane region" description="Helical" evidence="1">
    <location>
        <begin position="230"/>
        <end position="250"/>
    </location>
</feature>
<feature type="transmembrane region" description="Helical" evidence="1">
    <location>
        <begin position="254"/>
        <end position="274"/>
    </location>
</feature>
<feature type="transmembrane region" description="Helical" evidence="1">
    <location>
        <begin position="281"/>
        <end position="301"/>
    </location>
</feature>
<feature type="transmembrane region" description="Helical" evidence="1">
    <location>
        <begin position="328"/>
        <end position="348"/>
    </location>
</feature>
<proteinExistence type="inferred from homology"/>
<reference key="1">
    <citation type="journal article" date="2006" name="BMC Genomics">
        <title>Comparative genome analysis: selection pressure on the Borrelia vls cassettes is essential for infectivity.</title>
        <authorList>
            <person name="Gloeckner G."/>
            <person name="Schulte-Spechtel U."/>
            <person name="Schilhabel M."/>
            <person name="Felder M."/>
            <person name="Suehnel J."/>
            <person name="Wilske B."/>
            <person name="Platzer M."/>
        </authorList>
    </citation>
    <scope>NUCLEOTIDE SEQUENCE [LARGE SCALE GENOMIC DNA]</scope>
    <source>
        <strain>PKo</strain>
    </source>
</reference>
<reference key="2">
    <citation type="journal article" date="2011" name="J. Bacteriol.">
        <title>Whole-genome sequences of two Borrelia afzelii and two Borrelia garinii Lyme disease agent isolates.</title>
        <authorList>
            <person name="Casjens S.R."/>
            <person name="Mongodin E.F."/>
            <person name="Qiu W.G."/>
            <person name="Dunn J.J."/>
            <person name="Luft B.J."/>
            <person name="Fraser-Liggett C.M."/>
            <person name="Schutzer S.E."/>
        </authorList>
    </citation>
    <scope>NUCLEOTIDE SEQUENCE [LARGE SCALE GENOMIC DNA]</scope>
    <source>
        <strain>PKo</strain>
    </source>
</reference>
<gene>
    <name evidence="1" type="primary">mraY</name>
    <name type="ordered locus">BAPKO_0314</name>
    <name type="ordered locus">BafPKo_0305</name>
</gene>
<dbReference type="EC" id="2.7.8.13" evidence="1"/>
<dbReference type="EMBL" id="CP000395">
    <property type="protein sequence ID" value="ABH01571.1"/>
    <property type="molecule type" value="Genomic_DNA"/>
</dbReference>
<dbReference type="EMBL" id="CP002933">
    <property type="protein sequence ID" value="AEL69531.1"/>
    <property type="molecule type" value="Genomic_DNA"/>
</dbReference>
<dbReference type="RefSeq" id="WP_004790551.1">
    <property type="nucleotide sequence ID" value="NZ_CP160066.1"/>
</dbReference>
<dbReference type="SMR" id="Q0SNK7"/>
<dbReference type="STRING" id="29518.BLA32_02780"/>
<dbReference type="GeneID" id="76831840"/>
<dbReference type="KEGG" id="baf:BAPKO_0314"/>
<dbReference type="KEGG" id="bafz:BafPKo_0305"/>
<dbReference type="PATRIC" id="fig|390236.22.peg.299"/>
<dbReference type="eggNOG" id="COG0472">
    <property type="taxonomic scope" value="Bacteria"/>
</dbReference>
<dbReference type="HOGENOM" id="CLU_023982_0_0_12"/>
<dbReference type="OrthoDB" id="9805475at2"/>
<dbReference type="UniPathway" id="UPA00219"/>
<dbReference type="Proteomes" id="UP000005216">
    <property type="component" value="Chromosome"/>
</dbReference>
<dbReference type="GO" id="GO:0005886">
    <property type="term" value="C:plasma membrane"/>
    <property type="evidence" value="ECO:0007669"/>
    <property type="project" value="UniProtKB-SubCell"/>
</dbReference>
<dbReference type="GO" id="GO:0046872">
    <property type="term" value="F:metal ion binding"/>
    <property type="evidence" value="ECO:0007669"/>
    <property type="project" value="UniProtKB-KW"/>
</dbReference>
<dbReference type="GO" id="GO:0008963">
    <property type="term" value="F:phospho-N-acetylmuramoyl-pentapeptide-transferase activity"/>
    <property type="evidence" value="ECO:0007669"/>
    <property type="project" value="UniProtKB-UniRule"/>
</dbReference>
<dbReference type="GO" id="GO:0051992">
    <property type="term" value="F:UDP-N-acetylmuramoyl-L-alanyl-D-glutamyl-meso-2,6-diaminopimelyl-D-alanyl-D-alanine:undecaprenyl-phosphate transferase activity"/>
    <property type="evidence" value="ECO:0007669"/>
    <property type="project" value="RHEA"/>
</dbReference>
<dbReference type="GO" id="GO:0051301">
    <property type="term" value="P:cell division"/>
    <property type="evidence" value="ECO:0007669"/>
    <property type="project" value="UniProtKB-KW"/>
</dbReference>
<dbReference type="GO" id="GO:0071555">
    <property type="term" value="P:cell wall organization"/>
    <property type="evidence" value="ECO:0007669"/>
    <property type="project" value="UniProtKB-KW"/>
</dbReference>
<dbReference type="GO" id="GO:0009252">
    <property type="term" value="P:peptidoglycan biosynthetic process"/>
    <property type="evidence" value="ECO:0007669"/>
    <property type="project" value="UniProtKB-UniRule"/>
</dbReference>
<dbReference type="GO" id="GO:0008360">
    <property type="term" value="P:regulation of cell shape"/>
    <property type="evidence" value="ECO:0007669"/>
    <property type="project" value="UniProtKB-KW"/>
</dbReference>
<dbReference type="CDD" id="cd06852">
    <property type="entry name" value="GT_MraY"/>
    <property type="match status" value="1"/>
</dbReference>
<dbReference type="HAMAP" id="MF_00038">
    <property type="entry name" value="MraY"/>
    <property type="match status" value="1"/>
</dbReference>
<dbReference type="InterPro" id="IPR000715">
    <property type="entry name" value="Glycosyl_transferase_4"/>
</dbReference>
<dbReference type="InterPro" id="IPR003524">
    <property type="entry name" value="PNAcMuramoyl-5peptid_Trfase"/>
</dbReference>
<dbReference type="InterPro" id="IPR018480">
    <property type="entry name" value="PNAcMuramoyl-5peptid_Trfase_CS"/>
</dbReference>
<dbReference type="NCBIfam" id="TIGR00445">
    <property type="entry name" value="mraY"/>
    <property type="match status" value="1"/>
</dbReference>
<dbReference type="PANTHER" id="PTHR22926">
    <property type="entry name" value="PHOSPHO-N-ACETYLMURAMOYL-PENTAPEPTIDE-TRANSFERASE"/>
    <property type="match status" value="1"/>
</dbReference>
<dbReference type="PANTHER" id="PTHR22926:SF5">
    <property type="entry name" value="PHOSPHO-N-ACETYLMURAMOYL-PENTAPEPTIDE-TRANSFERASE HOMOLOG"/>
    <property type="match status" value="1"/>
</dbReference>
<dbReference type="Pfam" id="PF00953">
    <property type="entry name" value="Glycos_transf_4"/>
    <property type="match status" value="1"/>
</dbReference>
<dbReference type="PROSITE" id="PS01347">
    <property type="entry name" value="MRAY_1"/>
    <property type="match status" value="1"/>
</dbReference>
<dbReference type="PROSITE" id="PS01348">
    <property type="entry name" value="MRAY_2"/>
    <property type="match status" value="1"/>
</dbReference>